<accession>Q0ZIX0</accession>
<sequence length="57" mass="6590">MAVPKKRTSMSKKRIHKNIWKRKGWRAALKAFALAKSLSTGNSKSFFVRQLNNQTLE</sequence>
<comment type="subcellular location">
    <subcellularLocation>
        <location>Plastid</location>
        <location>Chloroplast</location>
    </subcellularLocation>
</comment>
<comment type="similarity">
    <text evidence="1">Belongs to the bacterial ribosomal protein bL32 family.</text>
</comment>
<gene>
    <name evidence="1" type="primary">rpl32</name>
</gene>
<keyword id="KW-0150">Chloroplast</keyword>
<keyword id="KW-0934">Plastid</keyword>
<keyword id="KW-1185">Reference proteome</keyword>
<keyword id="KW-0687">Ribonucleoprotein</keyword>
<keyword id="KW-0689">Ribosomal protein</keyword>
<organism>
    <name type="scientific">Vitis vinifera</name>
    <name type="common">Grape</name>
    <dbReference type="NCBI Taxonomy" id="29760"/>
    <lineage>
        <taxon>Eukaryota</taxon>
        <taxon>Viridiplantae</taxon>
        <taxon>Streptophyta</taxon>
        <taxon>Embryophyta</taxon>
        <taxon>Tracheophyta</taxon>
        <taxon>Spermatophyta</taxon>
        <taxon>Magnoliopsida</taxon>
        <taxon>eudicotyledons</taxon>
        <taxon>Gunneridae</taxon>
        <taxon>Pentapetalae</taxon>
        <taxon>rosids</taxon>
        <taxon>Vitales</taxon>
        <taxon>Vitaceae</taxon>
        <taxon>Viteae</taxon>
        <taxon>Vitis</taxon>
    </lineage>
</organism>
<protein>
    <recommendedName>
        <fullName evidence="1">Large ribosomal subunit protein bL32c</fullName>
    </recommendedName>
    <alternativeName>
        <fullName evidence="2">50S ribosomal protein L32, chloroplastic</fullName>
    </alternativeName>
</protein>
<evidence type="ECO:0000255" key="1">
    <source>
        <dbReference type="HAMAP-Rule" id="MF_00340"/>
    </source>
</evidence>
<evidence type="ECO:0000305" key="2"/>
<geneLocation type="chloroplast"/>
<feature type="chain" id="PRO_0000276490" description="Large ribosomal subunit protein bL32c">
    <location>
        <begin position="1"/>
        <end position="57"/>
    </location>
</feature>
<proteinExistence type="inferred from homology"/>
<reference key="1">
    <citation type="journal article" date="2006" name="BMC Evol. Biol.">
        <title>Phylogenetic analyses of Vitis (Vitaceae) based on complete chloroplast genome sequences: effects of taxon sampling and phylogenetic methods on resolving relationships among rosids.</title>
        <authorList>
            <person name="Jansen R.K."/>
            <person name="Kaittanis C."/>
            <person name="Lee S.-B."/>
            <person name="Saski C."/>
            <person name="Tomkins J."/>
            <person name="Alverson A.J."/>
            <person name="Daniell H."/>
        </authorList>
    </citation>
    <scope>NUCLEOTIDE SEQUENCE [LARGE SCALE GENOMIC DNA]</scope>
    <source>
        <strain>cv. Maxxa</strain>
    </source>
</reference>
<dbReference type="EMBL" id="DQ424856">
    <property type="protein sequence ID" value="ABE47583.1"/>
    <property type="molecule type" value="Genomic_DNA"/>
</dbReference>
<dbReference type="RefSeq" id="YP_567126.1">
    <property type="nucleotide sequence ID" value="NC_007957.1"/>
</dbReference>
<dbReference type="SMR" id="Q0ZIX0"/>
<dbReference type="FunCoup" id="Q0ZIX0">
    <property type="interactions" value="292"/>
</dbReference>
<dbReference type="STRING" id="29760.Q0ZIX0"/>
<dbReference type="PaxDb" id="29760-VIT_00s0246g00160.t01"/>
<dbReference type="GeneID" id="4025036"/>
<dbReference type="KEGG" id="vvi:4025036"/>
<dbReference type="eggNOG" id="ENOG502SANY">
    <property type="taxonomic scope" value="Eukaryota"/>
</dbReference>
<dbReference type="InParanoid" id="Q0ZIX0"/>
<dbReference type="Proteomes" id="UP000009183">
    <property type="component" value="Chloroplast"/>
</dbReference>
<dbReference type="GO" id="GO:0009507">
    <property type="term" value="C:chloroplast"/>
    <property type="evidence" value="ECO:0007669"/>
    <property type="project" value="UniProtKB-SubCell"/>
</dbReference>
<dbReference type="GO" id="GO:0015934">
    <property type="term" value="C:large ribosomal subunit"/>
    <property type="evidence" value="ECO:0007669"/>
    <property type="project" value="InterPro"/>
</dbReference>
<dbReference type="GO" id="GO:0003735">
    <property type="term" value="F:structural constituent of ribosome"/>
    <property type="evidence" value="ECO:0007669"/>
    <property type="project" value="InterPro"/>
</dbReference>
<dbReference type="GO" id="GO:0006412">
    <property type="term" value="P:translation"/>
    <property type="evidence" value="ECO:0007669"/>
    <property type="project" value="UniProtKB-UniRule"/>
</dbReference>
<dbReference type="HAMAP" id="MF_00340">
    <property type="entry name" value="Ribosomal_bL32"/>
    <property type="match status" value="1"/>
</dbReference>
<dbReference type="InterPro" id="IPR002677">
    <property type="entry name" value="Ribosomal_bL32"/>
</dbReference>
<dbReference type="InterPro" id="IPR044958">
    <property type="entry name" value="Ribosomal_bL32_plant/cyanobact"/>
</dbReference>
<dbReference type="PANTHER" id="PTHR36083">
    <property type="entry name" value="50S RIBOSOMAL PROTEIN L32, CHLOROPLASTIC"/>
    <property type="match status" value="1"/>
</dbReference>
<dbReference type="PANTHER" id="PTHR36083:SF1">
    <property type="entry name" value="LARGE RIBOSOMAL SUBUNIT PROTEIN BL32C"/>
    <property type="match status" value="1"/>
</dbReference>
<name>RK32_VITVI</name>